<organism>
    <name type="scientific">Vaccinia virus (strain L-IVP)</name>
    <name type="common">VACV</name>
    <dbReference type="NCBI Taxonomy" id="31531"/>
    <lineage>
        <taxon>Viruses</taxon>
        <taxon>Varidnaviria</taxon>
        <taxon>Bamfordvirae</taxon>
        <taxon>Nucleocytoviricota</taxon>
        <taxon>Pokkesviricetes</taxon>
        <taxon>Chitovirales</taxon>
        <taxon>Poxviridae</taxon>
        <taxon>Chordopoxvirinae</taxon>
        <taxon>Orthopoxvirus</taxon>
        <taxon>Vaccinia virus</taxon>
    </lineage>
</organism>
<protein>
    <recommendedName>
        <fullName>Ribonucleoside-diphosphate reductase small chain</fullName>
        <ecNumber>1.17.4.1</ecNumber>
    </recommendedName>
    <alternativeName>
        <fullName>Ribonucleotide reductase small subunit</fullName>
    </alternativeName>
    <alternativeName>
        <fullName>Ribonucleotide reductase subunit 2</fullName>
        <shortName>RNR2</shortName>
    </alternativeName>
</protein>
<dbReference type="EC" id="1.17.4.1"/>
<dbReference type="EMBL" id="M57977">
    <property type="protein sequence ID" value="AAA48294.1"/>
    <property type="molecule type" value="Genomic_DNA"/>
</dbReference>
<dbReference type="SMR" id="P29883"/>
<dbReference type="GO" id="GO:0046872">
    <property type="term" value="F:metal ion binding"/>
    <property type="evidence" value="ECO:0007669"/>
    <property type="project" value="UniProtKB-KW"/>
</dbReference>
<dbReference type="GO" id="GO:0004748">
    <property type="term" value="F:ribonucleoside-diphosphate reductase activity, thioredoxin disulfide as acceptor"/>
    <property type="evidence" value="ECO:0007669"/>
    <property type="project" value="UniProtKB-EC"/>
</dbReference>
<dbReference type="GO" id="GO:0009263">
    <property type="term" value="P:deoxyribonucleotide biosynthetic process"/>
    <property type="evidence" value="ECO:0007669"/>
    <property type="project" value="UniProtKB-KW"/>
</dbReference>
<dbReference type="CDD" id="cd01049">
    <property type="entry name" value="RNRR2"/>
    <property type="match status" value="1"/>
</dbReference>
<dbReference type="FunFam" id="1.10.620.20:FF:000004">
    <property type="entry name" value="Ribonucleoside-diphosphate reductase subunit M2 B"/>
    <property type="match status" value="1"/>
</dbReference>
<dbReference type="Gene3D" id="1.10.620.20">
    <property type="entry name" value="Ribonucleotide Reductase, subunit A"/>
    <property type="match status" value="1"/>
</dbReference>
<dbReference type="InterPro" id="IPR009078">
    <property type="entry name" value="Ferritin-like_SF"/>
</dbReference>
<dbReference type="InterPro" id="IPR012348">
    <property type="entry name" value="RNR-like"/>
</dbReference>
<dbReference type="InterPro" id="IPR033909">
    <property type="entry name" value="RNR_small"/>
</dbReference>
<dbReference type="InterPro" id="IPR030475">
    <property type="entry name" value="RNR_small_AS"/>
</dbReference>
<dbReference type="InterPro" id="IPR000358">
    <property type="entry name" value="RNR_small_fam"/>
</dbReference>
<dbReference type="PANTHER" id="PTHR23409">
    <property type="entry name" value="RIBONUCLEOSIDE-DIPHOSPHATE REDUCTASE SMALL CHAIN"/>
    <property type="match status" value="1"/>
</dbReference>
<dbReference type="PANTHER" id="PTHR23409:SF18">
    <property type="entry name" value="RIBONUCLEOSIDE-DIPHOSPHATE REDUCTASE SUBUNIT M2"/>
    <property type="match status" value="1"/>
</dbReference>
<dbReference type="Pfam" id="PF00268">
    <property type="entry name" value="Ribonuc_red_sm"/>
    <property type="match status" value="1"/>
</dbReference>
<dbReference type="SUPFAM" id="SSF47240">
    <property type="entry name" value="Ferritin-like"/>
    <property type="match status" value="1"/>
</dbReference>
<dbReference type="PROSITE" id="PS00368">
    <property type="entry name" value="RIBORED_SMALL"/>
    <property type="match status" value="1"/>
</dbReference>
<reference key="1">
    <citation type="journal article" date="1988" name="Biotekhnologiya">
        <title>Structural-functional organization of segment of vaccinia virus genome.</title>
        <authorList>
            <person name="Mikryukov N.N."/>
            <person name="Chizhikov V.E."/>
            <person name="Prikhod'Ko G.G."/>
            <person name="Urmmanov I.M."/>
            <person name="Serpinskii O.I."/>
            <person name="Blinov V.M."/>
            <person name="Nikulin A.E."/>
            <person name="Vasilenko S.K."/>
        </authorList>
    </citation>
    <scope>NUCLEOTIDE SEQUENCE [GENOMIC DNA]</scope>
</reference>
<proteinExistence type="evidence at transcript level"/>
<name>RIR2_VACCP</name>
<comment type="function">
    <text evidence="2">Ribonucleoside-diphosphate reductase holoenzyme provides the precursors necessary for viral DNA synthesis. Allows virus growth in non-dividing cells. Catalyzes the biosynthesis of deoxyribonucleotides from the corresponding ribonucleotides.</text>
</comment>
<comment type="catalytic activity">
    <reaction evidence="3">
        <text>a 2'-deoxyribonucleoside 5'-diphosphate + [thioredoxin]-disulfide + H2O = a ribonucleoside 5'-diphosphate + [thioredoxin]-dithiol</text>
        <dbReference type="Rhea" id="RHEA:23252"/>
        <dbReference type="Rhea" id="RHEA-COMP:10698"/>
        <dbReference type="Rhea" id="RHEA-COMP:10700"/>
        <dbReference type="ChEBI" id="CHEBI:15377"/>
        <dbReference type="ChEBI" id="CHEBI:29950"/>
        <dbReference type="ChEBI" id="CHEBI:50058"/>
        <dbReference type="ChEBI" id="CHEBI:57930"/>
        <dbReference type="ChEBI" id="CHEBI:73316"/>
        <dbReference type="EC" id="1.17.4.1"/>
    </reaction>
</comment>
<comment type="cofactor">
    <cofactor evidence="1">
        <name>Fe cation</name>
        <dbReference type="ChEBI" id="CHEBI:24875"/>
    </cofactor>
    <text evidence="1">Binds 2 iron ions per subunit.</text>
</comment>
<comment type="subunit">
    <text evidence="2">Interacts with RNR1/OPG080 subunit. Can interact with host RNR1 supunit.</text>
</comment>
<comment type="induction">
    <text>Expressed early in the viral replicative cycle.</text>
</comment>
<comment type="similarity">
    <text evidence="4">Belongs to the ribonucleoside diphosphate reductase small chain family.</text>
</comment>
<keyword id="KW-0215">Deoxyribonucleotide synthesis</keyword>
<keyword id="KW-0244">Early protein</keyword>
<keyword id="KW-0408">Iron</keyword>
<keyword id="KW-0479">Metal-binding</keyword>
<keyword id="KW-0560">Oxidoreductase</keyword>
<sequence>MEPILAPNPNRFVIFPIQYHDIWNMYKKAEASFWTVEEVDISKDINDWNKVTPDEKYFIKHVLAFFAASDGIVNENLAERFCTEVQITEARCFYGFRMAIENIHSEMYSLLIDTYVKDSNEKNYLFNAIETMPCVKKKADWAQKWIHDSAGYGERLIAFAAVEGIFFSGSFASIFWLKKRGLMPGLTFSNELISRDEGLHCDFACLMFKHLLHPPSEETVRSIITDAVSIEQEFLTAALPVKLIGMNCEMMKTYIEFVADRLISELGFKKIYNVTNPFDFMENISLEGKTNFFEKRVGEYQKMGVMSQKDNHFSLDVDF</sequence>
<accession>P29883</accession>
<feature type="chain" id="PRO_0000190497" description="Ribonucleoside-diphosphate reductase small chain">
    <location>
        <begin position="1"/>
        <end position="319"/>
    </location>
</feature>
<feature type="region of interest" description="Interaction with R1" evidence="2">
    <location>
        <begin position="313"/>
        <end position="319"/>
    </location>
</feature>
<feature type="active site" evidence="3">
    <location>
        <position position="108"/>
    </location>
</feature>
<feature type="binding site" evidence="3">
    <location>
        <position position="70"/>
    </location>
    <ligand>
        <name>Fe cation</name>
        <dbReference type="ChEBI" id="CHEBI:24875"/>
        <label>1</label>
    </ligand>
</feature>
<feature type="binding site" evidence="3">
    <location>
        <position position="101"/>
    </location>
    <ligand>
        <name>Fe cation</name>
        <dbReference type="ChEBI" id="CHEBI:24875"/>
        <label>1</label>
    </ligand>
</feature>
<feature type="binding site" evidence="1">
    <location>
        <position position="101"/>
    </location>
    <ligand>
        <name>Fe cation</name>
        <dbReference type="ChEBI" id="CHEBI:24875"/>
        <label>2</label>
    </ligand>
</feature>
<feature type="binding site" evidence="3">
    <location>
        <position position="104"/>
    </location>
    <ligand>
        <name>Fe cation</name>
        <dbReference type="ChEBI" id="CHEBI:24875"/>
        <label>1</label>
    </ligand>
</feature>
<feature type="binding site" evidence="1">
    <location>
        <position position="163"/>
    </location>
    <ligand>
        <name>Fe cation</name>
        <dbReference type="ChEBI" id="CHEBI:24875"/>
        <label>2</label>
    </ligand>
</feature>
<feature type="binding site" evidence="1">
    <location>
        <position position="197"/>
    </location>
    <ligand>
        <name>Fe cation</name>
        <dbReference type="ChEBI" id="CHEBI:24875"/>
        <label>2</label>
    </ligand>
</feature>
<feature type="binding site" evidence="1">
    <location>
        <position position="200"/>
    </location>
    <ligand>
        <name>Fe cation</name>
        <dbReference type="ChEBI" id="CHEBI:24875"/>
        <label>2</label>
    </ligand>
</feature>
<organismHost>
    <name type="scientific">Homo sapiens</name>
    <name type="common">Human</name>
    <dbReference type="NCBI Taxonomy" id="9606"/>
</organismHost>
<gene>
    <name type="primary">OPG048</name>
    <name type="ORF">F14</name>
</gene>
<evidence type="ECO:0000250" key="1"/>
<evidence type="ECO:0000250" key="2">
    <source>
        <dbReference type="UniProtKB" id="P11158"/>
    </source>
</evidence>
<evidence type="ECO:0000255" key="3">
    <source>
        <dbReference type="PROSITE-ProRule" id="PRU10014"/>
    </source>
</evidence>
<evidence type="ECO:0000305" key="4"/>